<dbReference type="EC" id="6.3.5.2" evidence="1"/>
<dbReference type="EMBL" id="CP000300">
    <property type="protein sequence ID" value="ABE51080.1"/>
    <property type="molecule type" value="Genomic_DNA"/>
</dbReference>
<dbReference type="RefSeq" id="WP_011498244.1">
    <property type="nucleotide sequence ID" value="NC_007955.1"/>
</dbReference>
<dbReference type="SMR" id="Q12ZP6"/>
<dbReference type="STRING" id="259564.Mbur_0058"/>
<dbReference type="GeneID" id="3997185"/>
<dbReference type="KEGG" id="mbu:Mbur_0058"/>
<dbReference type="HOGENOM" id="CLU_014340_0_0_2"/>
<dbReference type="OrthoDB" id="33844at2157"/>
<dbReference type="UniPathway" id="UPA00189">
    <property type="reaction ID" value="UER00296"/>
</dbReference>
<dbReference type="Proteomes" id="UP000001979">
    <property type="component" value="Chromosome"/>
</dbReference>
<dbReference type="GO" id="GO:0005829">
    <property type="term" value="C:cytosol"/>
    <property type="evidence" value="ECO:0007669"/>
    <property type="project" value="TreeGrafter"/>
</dbReference>
<dbReference type="GO" id="GO:0005524">
    <property type="term" value="F:ATP binding"/>
    <property type="evidence" value="ECO:0007669"/>
    <property type="project" value="UniProtKB-UniRule"/>
</dbReference>
<dbReference type="GO" id="GO:0003921">
    <property type="term" value="F:GMP synthase activity"/>
    <property type="evidence" value="ECO:0007669"/>
    <property type="project" value="InterPro"/>
</dbReference>
<dbReference type="CDD" id="cd01997">
    <property type="entry name" value="GMP_synthase_C"/>
    <property type="match status" value="1"/>
</dbReference>
<dbReference type="FunFam" id="3.40.50.620:FF:000208">
    <property type="entry name" value="GMP synthase [glutamine-hydrolyzing] subunit B"/>
    <property type="match status" value="1"/>
</dbReference>
<dbReference type="Gene3D" id="3.30.300.10">
    <property type="match status" value="1"/>
</dbReference>
<dbReference type="Gene3D" id="3.40.50.620">
    <property type="entry name" value="HUPs"/>
    <property type="match status" value="1"/>
</dbReference>
<dbReference type="HAMAP" id="MF_00345">
    <property type="entry name" value="GMP_synthase_B"/>
    <property type="match status" value="1"/>
</dbReference>
<dbReference type="InterPro" id="IPR001674">
    <property type="entry name" value="GMP_synth_C"/>
</dbReference>
<dbReference type="InterPro" id="IPR026598">
    <property type="entry name" value="GMP_synthase_B"/>
</dbReference>
<dbReference type="InterPro" id="IPR025777">
    <property type="entry name" value="GMPS_ATP_PPase_dom"/>
</dbReference>
<dbReference type="InterPro" id="IPR022310">
    <property type="entry name" value="NAD/GMP_synthase"/>
</dbReference>
<dbReference type="InterPro" id="IPR014729">
    <property type="entry name" value="Rossmann-like_a/b/a_fold"/>
</dbReference>
<dbReference type="NCBIfam" id="TIGR00884">
    <property type="entry name" value="guaA_Cterm"/>
    <property type="match status" value="1"/>
</dbReference>
<dbReference type="PANTHER" id="PTHR11922:SF2">
    <property type="entry name" value="GMP SYNTHASE [GLUTAMINE-HYDROLYZING]"/>
    <property type="match status" value="1"/>
</dbReference>
<dbReference type="PANTHER" id="PTHR11922">
    <property type="entry name" value="GMP SYNTHASE-RELATED"/>
    <property type="match status" value="1"/>
</dbReference>
<dbReference type="Pfam" id="PF00958">
    <property type="entry name" value="GMP_synt_C"/>
    <property type="match status" value="1"/>
</dbReference>
<dbReference type="Pfam" id="PF02540">
    <property type="entry name" value="NAD_synthase"/>
    <property type="match status" value="1"/>
</dbReference>
<dbReference type="SUPFAM" id="SSF52402">
    <property type="entry name" value="Adenine nucleotide alpha hydrolases-like"/>
    <property type="match status" value="1"/>
</dbReference>
<dbReference type="SUPFAM" id="SSF54810">
    <property type="entry name" value="GMP synthetase C-terminal dimerisation domain"/>
    <property type="match status" value="1"/>
</dbReference>
<dbReference type="PROSITE" id="PS51553">
    <property type="entry name" value="GMPS_ATP_PPASE"/>
    <property type="match status" value="1"/>
</dbReference>
<comment type="function">
    <text evidence="1">Catalyzes the synthesis of GMP from XMP.</text>
</comment>
<comment type="catalytic activity">
    <reaction evidence="1">
        <text>XMP + L-glutamine + ATP + H2O = GMP + L-glutamate + AMP + diphosphate + 2 H(+)</text>
        <dbReference type="Rhea" id="RHEA:11680"/>
        <dbReference type="ChEBI" id="CHEBI:15377"/>
        <dbReference type="ChEBI" id="CHEBI:15378"/>
        <dbReference type="ChEBI" id="CHEBI:29985"/>
        <dbReference type="ChEBI" id="CHEBI:30616"/>
        <dbReference type="ChEBI" id="CHEBI:33019"/>
        <dbReference type="ChEBI" id="CHEBI:57464"/>
        <dbReference type="ChEBI" id="CHEBI:58115"/>
        <dbReference type="ChEBI" id="CHEBI:58359"/>
        <dbReference type="ChEBI" id="CHEBI:456215"/>
        <dbReference type="EC" id="6.3.5.2"/>
    </reaction>
</comment>
<comment type="pathway">
    <text evidence="1">Purine metabolism; GMP biosynthesis; GMP from XMP (L-Gln route): step 1/1.</text>
</comment>
<comment type="subunit">
    <text evidence="1">Heterodimer composed of a glutamine amidotransferase subunit (A) and a GMP-binding subunit (B).</text>
</comment>
<evidence type="ECO:0000255" key="1">
    <source>
        <dbReference type="HAMAP-Rule" id="MF_00345"/>
    </source>
</evidence>
<feature type="chain" id="PRO_1000048377" description="GMP synthase [glutamine-hydrolyzing] subunit B">
    <location>
        <begin position="1"/>
        <end position="304"/>
    </location>
</feature>
<feature type="domain" description="GMPS ATP-PPase" evidence="1">
    <location>
        <begin position="2"/>
        <end position="183"/>
    </location>
</feature>
<feature type="binding site" evidence="1">
    <location>
        <begin position="28"/>
        <end position="34"/>
    </location>
    <ligand>
        <name>ATP</name>
        <dbReference type="ChEBI" id="CHEBI:30616"/>
    </ligand>
</feature>
<sequence>MVKVEKFIPNAIDRIKEQAKGKTIIALSGGVDSSVCAVLAYQAIKDDLIPIYIDTGLMRKGETERIKEIFADMNLQTIDAKDRFLDALVGIKDPEEKRKVVGETFIRVFEEEAREINAQYLIQGTIYPDRIESDGGIKSHHNVGGLPEHIDFKGIIEPIDDLYKDEVREVAWALDLPEEICERMPFPGPGLSVRIIGEVTEEKVDVVREANAIVEEELLEQFKPWQTFAAVIGKGTGVKGDVRVHGWIIAVRAVGSRDGMTAEALELPWETLMKIESRISGEIASVARVLYDLSPKPPATIEFE</sequence>
<proteinExistence type="inferred from homology"/>
<protein>
    <recommendedName>
        <fullName evidence="1">GMP synthase [glutamine-hydrolyzing] subunit B</fullName>
        <ecNumber evidence="1">6.3.5.2</ecNumber>
    </recommendedName>
    <alternativeName>
        <fullName evidence="1">GMP synthetase</fullName>
    </alternativeName>
</protein>
<reference key="1">
    <citation type="journal article" date="2009" name="ISME J.">
        <title>The genome sequence of the psychrophilic archaeon, Methanococcoides burtonii: the role of genome evolution in cold adaptation.</title>
        <authorList>
            <person name="Allen M.A."/>
            <person name="Lauro F.M."/>
            <person name="Williams T.J."/>
            <person name="Burg D."/>
            <person name="Siddiqui K.S."/>
            <person name="De Francisci D."/>
            <person name="Chong K.W."/>
            <person name="Pilak O."/>
            <person name="Chew H.H."/>
            <person name="De Maere M.Z."/>
            <person name="Ting L."/>
            <person name="Katrib M."/>
            <person name="Ng C."/>
            <person name="Sowers K.R."/>
            <person name="Galperin M.Y."/>
            <person name="Anderson I.J."/>
            <person name="Ivanova N."/>
            <person name="Dalin E."/>
            <person name="Martinez M."/>
            <person name="Lapidus A."/>
            <person name="Hauser L."/>
            <person name="Land M."/>
            <person name="Thomas T."/>
            <person name="Cavicchioli R."/>
        </authorList>
    </citation>
    <scope>NUCLEOTIDE SEQUENCE [LARGE SCALE GENOMIC DNA]</scope>
    <source>
        <strain>DSM 6242 / NBRC 107633 / OCM 468 / ACE-M</strain>
    </source>
</reference>
<name>GUAAB_METBU</name>
<accession>Q12ZP6</accession>
<gene>
    <name evidence="1" type="primary">guaAB</name>
    <name type="ordered locus">Mbur_0058</name>
</gene>
<keyword id="KW-0067">ATP-binding</keyword>
<keyword id="KW-0332">GMP biosynthesis</keyword>
<keyword id="KW-0436">Ligase</keyword>
<keyword id="KW-0547">Nucleotide-binding</keyword>
<keyword id="KW-0658">Purine biosynthesis</keyword>
<organism>
    <name type="scientific">Methanococcoides burtonii (strain DSM 6242 / NBRC 107633 / OCM 468 / ACE-M)</name>
    <dbReference type="NCBI Taxonomy" id="259564"/>
    <lineage>
        <taxon>Archaea</taxon>
        <taxon>Methanobacteriati</taxon>
        <taxon>Methanobacteriota</taxon>
        <taxon>Stenosarchaea group</taxon>
        <taxon>Methanomicrobia</taxon>
        <taxon>Methanosarcinales</taxon>
        <taxon>Methanosarcinaceae</taxon>
        <taxon>Methanococcoides</taxon>
    </lineage>
</organism>